<gene>
    <name evidence="1" type="primary">rpsO</name>
    <name type="ordered locus">Ajs_0952</name>
</gene>
<dbReference type="EMBL" id="CP000539">
    <property type="protein sequence ID" value="ABM41192.1"/>
    <property type="molecule type" value="Genomic_DNA"/>
</dbReference>
<dbReference type="SMR" id="A1W4L7"/>
<dbReference type="STRING" id="232721.Ajs_0952"/>
<dbReference type="KEGG" id="ajs:Ajs_0952"/>
<dbReference type="eggNOG" id="COG0184">
    <property type="taxonomic scope" value="Bacteria"/>
</dbReference>
<dbReference type="HOGENOM" id="CLU_148518_0_0_4"/>
<dbReference type="Proteomes" id="UP000000645">
    <property type="component" value="Chromosome"/>
</dbReference>
<dbReference type="GO" id="GO:0022627">
    <property type="term" value="C:cytosolic small ribosomal subunit"/>
    <property type="evidence" value="ECO:0007669"/>
    <property type="project" value="TreeGrafter"/>
</dbReference>
<dbReference type="GO" id="GO:0019843">
    <property type="term" value="F:rRNA binding"/>
    <property type="evidence" value="ECO:0007669"/>
    <property type="project" value="UniProtKB-UniRule"/>
</dbReference>
<dbReference type="GO" id="GO:0003735">
    <property type="term" value="F:structural constituent of ribosome"/>
    <property type="evidence" value="ECO:0007669"/>
    <property type="project" value="InterPro"/>
</dbReference>
<dbReference type="GO" id="GO:0006412">
    <property type="term" value="P:translation"/>
    <property type="evidence" value="ECO:0007669"/>
    <property type="project" value="UniProtKB-UniRule"/>
</dbReference>
<dbReference type="CDD" id="cd00353">
    <property type="entry name" value="Ribosomal_S15p_S13e"/>
    <property type="match status" value="1"/>
</dbReference>
<dbReference type="FunFam" id="1.10.287.10:FF:000002">
    <property type="entry name" value="30S ribosomal protein S15"/>
    <property type="match status" value="1"/>
</dbReference>
<dbReference type="Gene3D" id="6.10.250.3130">
    <property type="match status" value="1"/>
</dbReference>
<dbReference type="Gene3D" id="1.10.287.10">
    <property type="entry name" value="S15/NS1, RNA-binding"/>
    <property type="match status" value="1"/>
</dbReference>
<dbReference type="HAMAP" id="MF_01343_B">
    <property type="entry name" value="Ribosomal_uS15_B"/>
    <property type="match status" value="1"/>
</dbReference>
<dbReference type="InterPro" id="IPR000589">
    <property type="entry name" value="Ribosomal_uS15"/>
</dbReference>
<dbReference type="InterPro" id="IPR005290">
    <property type="entry name" value="Ribosomal_uS15_bac-type"/>
</dbReference>
<dbReference type="InterPro" id="IPR009068">
    <property type="entry name" value="uS15_NS1_RNA-bd_sf"/>
</dbReference>
<dbReference type="NCBIfam" id="TIGR00952">
    <property type="entry name" value="S15_bact"/>
    <property type="match status" value="1"/>
</dbReference>
<dbReference type="PANTHER" id="PTHR23321">
    <property type="entry name" value="RIBOSOMAL PROTEIN S15, BACTERIAL AND ORGANELLAR"/>
    <property type="match status" value="1"/>
</dbReference>
<dbReference type="PANTHER" id="PTHR23321:SF26">
    <property type="entry name" value="SMALL RIBOSOMAL SUBUNIT PROTEIN US15M"/>
    <property type="match status" value="1"/>
</dbReference>
<dbReference type="Pfam" id="PF00312">
    <property type="entry name" value="Ribosomal_S15"/>
    <property type="match status" value="1"/>
</dbReference>
<dbReference type="SMART" id="SM01387">
    <property type="entry name" value="Ribosomal_S15"/>
    <property type="match status" value="1"/>
</dbReference>
<dbReference type="SUPFAM" id="SSF47060">
    <property type="entry name" value="S15/NS1 RNA-binding domain"/>
    <property type="match status" value="1"/>
</dbReference>
<dbReference type="PROSITE" id="PS00362">
    <property type="entry name" value="RIBOSOMAL_S15"/>
    <property type="match status" value="1"/>
</dbReference>
<keyword id="KW-0687">Ribonucleoprotein</keyword>
<keyword id="KW-0689">Ribosomal protein</keyword>
<keyword id="KW-0694">RNA-binding</keyword>
<keyword id="KW-0699">rRNA-binding</keyword>
<sequence>MIASSVKAEVVKANARSANDTGSPEVQVALLTARINELTPHFKQHAKDHHGRRGLLRMVSRRRKLLDYLKAKDADRYTALIAKLGLRK</sequence>
<feature type="chain" id="PRO_1000054740" description="Small ribosomal subunit protein uS15">
    <location>
        <begin position="1"/>
        <end position="88"/>
    </location>
</feature>
<evidence type="ECO:0000255" key="1">
    <source>
        <dbReference type="HAMAP-Rule" id="MF_01343"/>
    </source>
</evidence>
<evidence type="ECO:0000305" key="2"/>
<accession>A1W4L7</accession>
<proteinExistence type="inferred from homology"/>
<comment type="function">
    <text evidence="1">One of the primary rRNA binding proteins, it binds directly to 16S rRNA where it helps nucleate assembly of the platform of the 30S subunit by binding and bridging several RNA helices of the 16S rRNA.</text>
</comment>
<comment type="function">
    <text evidence="1">Forms an intersubunit bridge (bridge B4) with the 23S rRNA of the 50S subunit in the ribosome.</text>
</comment>
<comment type="subunit">
    <text evidence="1">Part of the 30S ribosomal subunit. Forms a bridge to the 50S subunit in the 70S ribosome, contacting the 23S rRNA.</text>
</comment>
<comment type="similarity">
    <text evidence="1">Belongs to the universal ribosomal protein uS15 family.</text>
</comment>
<name>RS15_ACISJ</name>
<organism>
    <name type="scientific">Acidovorax sp. (strain JS42)</name>
    <dbReference type="NCBI Taxonomy" id="232721"/>
    <lineage>
        <taxon>Bacteria</taxon>
        <taxon>Pseudomonadati</taxon>
        <taxon>Pseudomonadota</taxon>
        <taxon>Betaproteobacteria</taxon>
        <taxon>Burkholderiales</taxon>
        <taxon>Comamonadaceae</taxon>
        <taxon>Acidovorax</taxon>
    </lineage>
</organism>
<protein>
    <recommendedName>
        <fullName evidence="1">Small ribosomal subunit protein uS15</fullName>
    </recommendedName>
    <alternativeName>
        <fullName evidence="2">30S ribosomal protein S15</fullName>
    </alternativeName>
</protein>
<reference key="1">
    <citation type="submission" date="2006-12" db="EMBL/GenBank/DDBJ databases">
        <title>Complete sequence of chromosome 1 of Acidovorax sp. JS42.</title>
        <authorList>
            <person name="Copeland A."/>
            <person name="Lucas S."/>
            <person name="Lapidus A."/>
            <person name="Barry K."/>
            <person name="Detter J.C."/>
            <person name="Glavina del Rio T."/>
            <person name="Dalin E."/>
            <person name="Tice H."/>
            <person name="Pitluck S."/>
            <person name="Chertkov O."/>
            <person name="Brettin T."/>
            <person name="Bruce D."/>
            <person name="Han C."/>
            <person name="Tapia R."/>
            <person name="Gilna P."/>
            <person name="Schmutz J."/>
            <person name="Larimer F."/>
            <person name="Land M."/>
            <person name="Hauser L."/>
            <person name="Kyrpides N."/>
            <person name="Kim E."/>
            <person name="Stahl D."/>
            <person name="Richardson P."/>
        </authorList>
    </citation>
    <scope>NUCLEOTIDE SEQUENCE [LARGE SCALE GENOMIC DNA]</scope>
    <source>
        <strain>JS42</strain>
    </source>
</reference>